<evidence type="ECO:0000255" key="1">
    <source>
        <dbReference type="HAMAP-Rule" id="MF_00503"/>
    </source>
</evidence>
<evidence type="ECO:0000305" key="2"/>
<dbReference type="EMBL" id="CP000786">
    <property type="protein sequence ID" value="ABZ98199.1"/>
    <property type="molecule type" value="Genomic_DNA"/>
</dbReference>
<dbReference type="RefSeq" id="WP_012389069.1">
    <property type="nucleotide sequence ID" value="NC_010602.1"/>
</dbReference>
<dbReference type="SMR" id="B0SSV9"/>
<dbReference type="STRING" id="456481.LEPBI_I2097"/>
<dbReference type="KEGG" id="lbi:LEPBI_I2097"/>
<dbReference type="HOGENOM" id="CLU_078938_3_0_12"/>
<dbReference type="OrthoDB" id="9788336at2"/>
<dbReference type="BioCyc" id="LBIF456481:LEPBI_RS10360-MONOMER"/>
<dbReference type="Proteomes" id="UP000001847">
    <property type="component" value="Chromosome I"/>
</dbReference>
<dbReference type="GO" id="GO:1990904">
    <property type="term" value="C:ribonucleoprotein complex"/>
    <property type="evidence" value="ECO:0007669"/>
    <property type="project" value="UniProtKB-KW"/>
</dbReference>
<dbReference type="GO" id="GO:0005840">
    <property type="term" value="C:ribosome"/>
    <property type="evidence" value="ECO:0007669"/>
    <property type="project" value="UniProtKB-KW"/>
</dbReference>
<dbReference type="GO" id="GO:0019843">
    <property type="term" value="F:rRNA binding"/>
    <property type="evidence" value="ECO:0007669"/>
    <property type="project" value="UniProtKB-UniRule"/>
</dbReference>
<dbReference type="GO" id="GO:0003735">
    <property type="term" value="F:structural constituent of ribosome"/>
    <property type="evidence" value="ECO:0007669"/>
    <property type="project" value="InterPro"/>
</dbReference>
<dbReference type="GO" id="GO:0006412">
    <property type="term" value="P:translation"/>
    <property type="evidence" value="ECO:0007669"/>
    <property type="project" value="UniProtKB-UniRule"/>
</dbReference>
<dbReference type="FunFam" id="3.40.5.10:FF:000008">
    <property type="entry name" value="50S ribosomal protein L9"/>
    <property type="match status" value="1"/>
</dbReference>
<dbReference type="Gene3D" id="3.10.430.100">
    <property type="entry name" value="Ribosomal protein L9, C-terminal domain"/>
    <property type="match status" value="1"/>
</dbReference>
<dbReference type="Gene3D" id="3.40.5.10">
    <property type="entry name" value="Ribosomal protein L9, N-terminal domain"/>
    <property type="match status" value="1"/>
</dbReference>
<dbReference type="HAMAP" id="MF_00503">
    <property type="entry name" value="Ribosomal_bL9"/>
    <property type="match status" value="1"/>
</dbReference>
<dbReference type="InterPro" id="IPR000244">
    <property type="entry name" value="Ribosomal_bL9"/>
</dbReference>
<dbReference type="InterPro" id="IPR009027">
    <property type="entry name" value="Ribosomal_bL9/RNase_H1_N"/>
</dbReference>
<dbReference type="InterPro" id="IPR020594">
    <property type="entry name" value="Ribosomal_bL9_bac/chp"/>
</dbReference>
<dbReference type="InterPro" id="IPR020069">
    <property type="entry name" value="Ribosomal_bL9_C"/>
</dbReference>
<dbReference type="InterPro" id="IPR036791">
    <property type="entry name" value="Ribosomal_bL9_C_sf"/>
</dbReference>
<dbReference type="InterPro" id="IPR020070">
    <property type="entry name" value="Ribosomal_bL9_N"/>
</dbReference>
<dbReference type="InterPro" id="IPR036935">
    <property type="entry name" value="Ribosomal_bL9_N_sf"/>
</dbReference>
<dbReference type="NCBIfam" id="TIGR00158">
    <property type="entry name" value="L9"/>
    <property type="match status" value="1"/>
</dbReference>
<dbReference type="PANTHER" id="PTHR21368">
    <property type="entry name" value="50S RIBOSOMAL PROTEIN L9"/>
    <property type="match status" value="1"/>
</dbReference>
<dbReference type="Pfam" id="PF03948">
    <property type="entry name" value="Ribosomal_L9_C"/>
    <property type="match status" value="1"/>
</dbReference>
<dbReference type="Pfam" id="PF01281">
    <property type="entry name" value="Ribosomal_L9_N"/>
    <property type="match status" value="1"/>
</dbReference>
<dbReference type="SUPFAM" id="SSF55658">
    <property type="entry name" value="L9 N-domain-like"/>
    <property type="match status" value="1"/>
</dbReference>
<dbReference type="SUPFAM" id="SSF55653">
    <property type="entry name" value="Ribosomal protein L9 C-domain"/>
    <property type="match status" value="1"/>
</dbReference>
<dbReference type="PROSITE" id="PS00651">
    <property type="entry name" value="RIBOSOMAL_L9"/>
    <property type="match status" value="1"/>
</dbReference>
<accession>B0SSV9</accession>
<name>RL9_LEPBP</name>
<proteinExistence type="inferred from homology"/>
<sequence length="148" mass="16146">MKVVLQKDVLNLGDAGDVKEVADGYARNFLIPRRLAVRANDGNTKAAIHQKRLAELKRDKRVKVMKELSASIDGKTYEIKVKVGENDKLFGSVTANDIALAIKNTGVELDKRKLDLGEPIKSVGEFKIKVRLAEGVVPGIIVKVVGQA</sequence>
<protein>
    <recommendedName>
        <fullName evidence="1">Large ribosomal subunit protein bL9</fullName>
    </recommendedName>
    <alternativeName>
        <fullName evidence="2">50S ribosomal protein L9</fullName>
    </alternativeName>
</protein>
<comment type="function">
    <text evidence="1">Binds to the 23S rRNA.</text>
</comment>
<comment type="similarity">
    <text evidence="1">Belongs to the bacterial ribosomal protein bL9 family.</text>
</comment>
<reference key="1">
    <citation type="journal article" date="2008" name="PLoS ONE">
        <title>Genome sequence of the saprophyte Leptospira biflexa provides insights into the evolution of Leptospira and the pathogenesis of leptospirosis.</title>
        <authorList>
            <person name="Picardeau M."/>
            <person name="Bulach D.M."/>
            <person name="Bouchier C."/>
            <person name="Zuerner R.L."/>
            <person name="Zidane N."/>
            <person name="Wilson P.J."/>
            <person name="Creno S."/>
            <person name="Kuczek E.S."/>
            <person name="Bommezzadri S."/>
            <person name="Davis J.C."/>
            <person name="McGrath A."/>
            <person name="Johnson M.J."/>
            <person name="Boursaux-Eude C."/>
            <person name="Seemann T."/>
            <person name="Rouy Z."/>
            <person name="Coppel R.L."/>
            <person name="Rood J.I."/>
            <person name="Lajus A."/>
            <person name="Davies J.K."/>
            <person name="Medigue C."/>
            <person name="Adler B."/>
        </authorList>
    </citation>
    <scope>NUCLEOTIDE SEQUENCE [LARGE SCALE GENOMIC DNA]</scope>
    <source>
        <strain>Patoc 1 / ATCC 23582 / Paris</strain>
    </source>
</reference>
<organism>
    <name type="scientific">Leptospira biflexa serovar Patoc (strain Patoc 1 / ATCC 23582 / Paris)</name>
    <dbReference type="NCBI Taxonomy" id="456481"/>
    <lineage>
        <taxon>Bacteria</taxon>
        <taxon>Pseudomonadati</taxon>
        <taxon>Spirochaetota</taxon>
        <taxon>Spirochaetia</taxon>
        <taxon>Leptospirales</taxon>
        <taxon>Leptospiraceae</taxon>
        <taxon>Leptospira</taxon>
    </lineage>
</organism>
<keyword id="KW-1185">Reference proteome</keyword>
<keyword id="KW-0687">Ribonucleoprotein</keyword>
<keyword id="KW-0689">Ribosomal protein</keyword>
<keyword id="KW-0694">RNA-binding</keyword>
<keyword id="KW-0699">rRNA-binding</keyword>
<feature type="chain" id="PRO_1000126933" description="Large ribosomal subunit protein bL9">
    <location>
        <begin position="1"/>
        <end position="148"/>
    </location>
</feature>
<gene>
    <name evidence="1" type="primary">rplI</name>
    <name type="ordered locus">LEPBI_I2097</name>
</gene>